<reference key="1">
    <citation type="journal article" date="2004" name="DNA Res.">
        <title>Prediction of the coding sequences of mouse homologues of KIAA gene: IV. The complete nucleotide sequences of 500 mouse KIAA-homologous cDNAs identified by screening of terminal sequences of cDNA clones randomly sampled from size-fractionated libraries.</title>
        <authorList>
            <person name="Okazaki N."/>
            <person name="Kikuno R."/>
            <person name="Ohara R."/>
            <person name="Inamoto S."/>
            <person name="Koseki H."/>
            <person name="Hiraoka S."/>
            <person name="Saga Y."/>
            <person name="Seino S."/>
            <person name="Nishimura M."/>
            <person name="Kaisho T."/>
            <person name="Hoshino K."/>
            <person name="Kitamura H."/>
            <person name="Nagase T."/>
            <person name="Ohara O."/>
            <person name="Koga H."/>
        </authorList>
    </citation>
    <scope>NUCLEOTIDE SEQUENCE [LARGE SCALE MRNA] (ISOFORM 2)</scope>
    <source>
        <tissue>Pancreatic islet</tissue>
    </source>
</reference>
<reference key="2">
    <citation type="journal article" date="2005" name="Science">
        <title>The transcriptional landscape of the mammalian genome.</title>
        <authorList>
            <person name="Carninci P."/>
            <person name="Kasukawa T."/>
            <person name="Katayama S."/>
            <person name="Gough J."/>
            <person name="Frith M.C."/>
            <person name="Maeda N."/>
            <person name="Oyama R."/>
            <person name="Ravasi T."/>
            <person name="Lenhard B."/>
            <person name="Wells C."/>
            <person name="Kodzius R."/>
            <person name="Shimokawa K."/>
            <person name="Bajic V.B."/>
            <person name="Brenner S.E."/>
            <person name="Batalov S."/>
            <person name="Forrest A.R."/>
            <person name="Zavolan M."/>
            <person name="Davis M.J."/>
            <person name="Wilming L.G."/>
            <person name="Aidinis V."/>
            <person name="Allen J.E."/>
            <person name="Ambesi-Impiombato A."/>
            <person name="Apweiler R."/>
            <person name="Aturaliya R.N."/>
            <person name="Bailey T.L."/>
            <person name="Bansal M."/>
            <person name="Baxter L."/>
            <person name="Beisel K.W."/>
            <person name="Bersano T."/>
            <person name="Bono H."/>
            <person name="Chalk A.M."/>
            <person name="Chiu K.P."/>
            <person name="Choudhary V."/>
            <person name="Christoffels A."/>
            <person name="Clutterbuck D.R."/>
            <person name="Crowe M.L."/>
            <person name="Dalla E."/>
            <person name="Dalrymple B.P."/>
            <person name="de Bono B."/>
            <person name="Della Gatta G."/>
            <person name="di Bernardo D."/>
            <person name="Down T."/>
            <person name="Engstrom P."/>
            <person name="Fagiolini M."/>
            <person name="Faulkner G."/>
            <person name="Fletcher C.F."/>
            <person name="Fukushima T."/>
            <person name="Furuno M."/>
            <person name="Futaki S."/>
            <person name="Gariboldi M."/>
            <person name="Georgii-Hemming P."/>
            <person name="Gingeras T.R."/>
            <person name="Gojobori T."/>
            <person name="Green R.E."/>
            <person name="Gustincich S."/>
            <person name="Harbers M."/>
            <person name="Hayashi Y."/>
            <person name="Hensch T.K."/>
            <person name="Hirokawa N."/>
            <person name="Hill D."/>
            <person name="Huminiecki L."/>
            <person name="Iacono M."/>
            <person name="Ikeo K."/>
            <person name="Iwama A."/>
            <person name="Ishikawa T."/>
            <person name="Jakt M."/>
            <person name="Kanapin A."/>
            <person name="Katoh M."/>
            <person name="Kawasawa Y."/>
            <person name="Kelso J."/>
            <person name="Kitamura H."/>
            <person name="Kitano H."/>
            <person name="Kollias G."/>
            <person name="Krishnan S.P."/>
            <person name="Kruger A."/>
            <person name="Kummerfeld S.K."/>
            <person name="Kurochkin I.V."/>
            <person name="Lareau L.F."/>
            <person name="Lazarevic D."/>
            <person name="Lipovich L."/>
            <person name="Liu J."/>
            <person name="Liuni S."/>
            <person name="McWilliam S."/>
            <person name="Madan Babu M."/>
            <person name="Madera M."/>
            <person name="Marchionni L."/>
            <person name="Matsuda H."/>
            <person name="Matsuzawa S."/>
            <person name="Miki H."/>
            <person name="Mignone F."/>
            <person name="Miyake S."/>
            <person name="Morris K."/>
            <person name="Mottagui-Tabar S."/>
            <person name="Mulder N."/>
            <person name="Nakano N."/>
            <person name="Nakauchi H."/>
            <person name="Ng P."/>
            <person name="Nilsson R."/>
            <person name="Nishiguchi S."/>
            <person name="Nishikawa S."/>
            <person name="Nori F."/>
            <person name="Ohara O."/>
            <person name="Okazaki Y."/>
            <person name="Orlando V."/>
            <person name="Pang K.C."/>
            <person name="Pavan W.J."/>
            <person name="Pavesi G."/>
            <person name="Pesole G."/>
            <person name="Petrovsky N."/>
            <person name="Piazza S."/>
            <person name="Reed J."/>
            <person name="Reid J.F."/>
            <person name="Ring B.Z."/>
            <person name="Ringwald M."/>
            <person name="Rost B."/>
            <person name="Ruan Y."/>
            <person name="Salzberg S.L."/>
            <person name="Sandelin A."/>
            <person name="Schneider C."/>
            <person name="Schoenbach C."/>
            <person name="Sekiguchi K."/>
            <person name="Semple C.A."/>
            <person name="Seno S."/>
            <person name="Sessa L."/>
            <person name="Sheng Y."/>
            <person name="Shibata Y."/>
            <person name="Shimada H."/>
            <person name="Shimada K."/>
            <person name="Silva D."/>
            <person name="Sinclair B."/>
            <person name="Sperling S."/>
            <person name="Stupka E."/>
            <person name="Sugiura K."/>
            <person name="Sultana R."/>
            <person name="Takenaka Y."/>
            <person name="Taki K."/>
            <person name="Tammoja K."/>
            <person name="Tan S.L."/>
            <person name="Tang S."/>
            <person name="Taylor M.S."/>
            <person name="Tegner J."/>
            <person name="Teichmann S.A."/>
            <person name="Ueda H.R."/>
            <person name="van Nimwegen E."/>
            <person name="Verardo R."/>
            <person name="Wei C.L."/>
            <person name="Yagi K."/>
            <person name="Yamanishi H."/>
            <person name="Zabarovsky E."/>
            <person name="Zhu S."/>
            <person name="Zimmer A."/>
            <person name="Hide W."/>
            <person name="Bult C."/>
            <person name="Grimmond S.M."/>
            <person name="Teasdale R.D."/>
            <person name="Liu E.T."/>
            <person name="Brusic V."/>
            <person name="Quackenbush J."/>
            <person name="Wahlestedt C."/>
            <person name="Mattick J.S."/>
            <person name="Hume D.A."/>
            <person name="Kai C."/>
            <person name="Sasaki D."/>
            <person name="Tomaru Y."/>
            <person name="Fukuda S."/>
            <person name="Kanamori-Katayama M."/>
            <person name="Suzuki M."/>
            <person name="Aoki J."/>
            <person name="Arakawa T."/>
            <person name="Iida J."/>
            <person name="Imamura K."/>
            <person name="Itoh M."/>
            <person name="Kato T."/>
            <person name="Kawaji H."/>
            <person name="Kawagashira N."/>
            <person name="Kawashima T."/>
            <person name="Kojima M."/>
            <person name="Kondo S."/>
            <person name="Konno H."/>
            <person name="Nakano K."/>
            <person name="Ninomiya N."/>
            <person name="Nishio T."/>
            <person name="Okada M."/>
            <person name="Plessy C."/>
            <person name="Shibata K."/>
            <person name="Shiraki T."/>
            <person name="Suzuki S."/>
            <person name="Tagami M."/>
            <person name="Waki K."/>
            <person name="Watahiki A."/>
            <person name="Okamura-Oho Y."/>
            <person name="Suzuki H."/>
            <person name="Kawai J."/>
            <person name="Hayashizaki Y."/>
        </authorList>
    </citation>
    <scope>NUCLEOTIDE SEQUENCE [LARGE SCALE MRNA] (ISOFORMS 1; 3; 4 AND 5)</scope>
    <source>
        <strain>C57BL/6J</strain>
        <tissue>Embryo</tissue>
        <tissue>Head</tissue>
        <tissue>Hypothalamus</tissue>
    </source>
</reference>
<reference key="3">
    <citation type="journal article" date="2004" name="Genome Res.">
        <title>The status, quality, and expansion of the NIH full-length cDNA project: the Mammalian Gene Collection (MGC).</title>
        <authorList>
            <consortium name="The MGC Project Team"/>
        </authorList>
    </citation>
    <scope>NUCLEOTIDE SEQUENCE [LARGE SCALE MRNA] (ISOFORM 5)</scope>
    <source>
        <strain>C57BL/6J</strain>
        <tissue>Brain</tissue>
    </source>
</reference>
<reference key="4">
    <citation type="journal article" date="2007" name="Genes Dev.">
        <title>A Rap GTPase interactor, RADIL, mediates migration of neural crest precursors.</title>
        <authorList>
            <person name="Smolen G.A."/>
            <person name="Schott B.J."/>
            <person name="Stewart R.A."/>
            <person name="Diederichs S."/>
            <person name="Muir B."/>
            <person name="Provencher H.L."/>
            <person name="Look A.T."/>
            <person name="Sgroi D.C."/>
            <person name="Peterson R.T."/>
            <person name="Haber D.A."/>
        </authorList>
    </citation>
    <scope>FUNCTION</scope>
</reference>
<reference key="5">
    <citation type="journal article" date="2010" name="Cell">
        <title>A tissue-specific atlas of mouse protein phosphorylation and expression.</title>
        <authorList>
            <person name="Huttlin E.L."/>
            <person name="Jedrychowski M.P."/>
            <person name="Elias J.E."/>
            <person name="Goswami T."/>
            <person name="Rad R."/>
            <person name="Beausoleil S.A."/>
            <person name="Villen J."/>
            <person name="Haas W."/>
            <person name="Sowa M.E."/>
            <person name="Gygi S.P."/>
        </authorList>
    </citation>
    <scope>PHOSPHORYLATION [LARGE SCALE ANALYSIS] AT SER-235; SER-245; SER-248; SER-250; SER-432 AND SER-915</scope>
    <scope>IDENTIFICATION BY MASS SPECTROMETRY [LARGE SCALE ANALYSIS]</scope>
    <source>
        <tissue>Brain</tissue>
        <tissue>Brown adipose tissue</tissue>
        <tissue>Lung</tissue>
        <tissue>Testis</tissue>
    </source>
</reference>
<sequence>MGSSIFLGLQPSPSHWLKSSVVIHEDAPTMFYGTQLIMSPPTKNKLKRQSQLLSTMLSRTLSYKYRDLDSTFCSLGASDDPSELSTQLSAPGVLKVFGDSVCTGTHYKSVLATGSSSAQELVKEALERYALDPECAGQYVLCDVVGQAGDSGQRWQAQCFRVFGDNEKPLLIQELWKPREGLSRRFELRKKSDVEELASRDVDTTTAGINAQARRLQRIRAKGTPALTSEAAQSSPPTRLRRTVSETSLSPAPSLPEAAQRPEEPVPEAMRYSLYQCPHLLLLQGYSQQHDSLVYVLSKERHTVGQRTPSSKPSISLSAPDILPLHCTIRRHQSPEGGPAGTRLVLEPITGASVSVNFSEVGRNPVVLQHGDLLSLGLYYLLLFKDPGQAQPLPACALARLGAAPQSCRMCGAVLRARGAPSLPAAVVRRRSLLLEFEPDVEDTLLQRIMTLIEPGGDDHKLTPAFLLCLCIQHSAMHFQPGTFRHLLLKISKRVRDTVWEKTKELAEKQAQLQEPISWASFPMADLVPDLQHILFWMSNSIELLYFIQQKSPLYVQSMEEELDVTGSKESLFSCTLTASEEAMAALEEVVLYAFQQCVYYLSKCLYVCLPALLECPPFQTERRESWRSGPALPEELRRVVSVFQATLDLLQQLQMHPEVASQMLAYLFFFSGTLLLNQVLDKGPSLSCFHWPRGVQVCARLQQFLEWARSAGLGAPAERFFRKLSCTLHLLATPRAQLIQMSWATLRVTFPALNPAQLHRLLTQYQLASAMGPVSAWEPGAPDGPEAFQSEDILESYENPPPIVLPSQGFQVDLEADCVEDSIYQHLLYIRHFLWGLRGQASPDSGPAQPESIEGLYHTIPEGHLEGHGCPLANRDPGRVAVETAPPHSLPVTGAPRAQGPPGRQPTRGDRRGSQAGSLHTDSSCMLTPPSTPLGLEPAGPSWPEPSGLCGRAVLDGQRNGPGGLPGAVLEGDAIQDAEPPAEASSPSSSAEDFCYVFMVELERGPSGLGMGLIDGMHTPLGAQGLYIQTLLPGSPAASDGRLSLGDQILEVNGSSLRGVSYMRAVDLIRHGGKKMRFLVAKSDMETAKKIRFRNPPS</sequence>
<organism>
    <name type="scientific">Mus musculus</name>
    <name type="common">Mouse</name>
    <dbReference type="NCBI Taxonomy" id="10090"/>
    <lineage>
        <taxon>Eukaryota</taxon>
        <taxon>Metazoa</taxon>
        <taxon>Chordata</taxon>
        <taxon>Craniata</taxon>
        <taxon>Vertebrata</taxon>
        <taxon>Euteleostomi</taxon>
        <taxon>Mammalia</taxon>
        <taxon>Eutheria</taxon>
        <taxon>Euarchontoglires</taxon>
        <taxon>Glires</taxon>
        <taxon>Rodentia</taxon>
        <taxon>Myomorpha</taxon>
        <taxon>Muroidea</taxon>
        <taxon>Muridae</taxon>
        <taxon>Murinae</taxon>
        <taxon>Mus</taxon>
        <taxon>Mus</taxon>
    </lineage>
</organism>
<feature type="chain" id="PRO_0000050804" description="Ras-associating and dilute domain-containing protein">
    <location>
        <begin position="1"/>
        <end position="1099"/>
    </location>
</feature>
<feature type="domain" description="Ras-associating" evidence="3">
    <location>
        <begin position="90"/>
        <end position="193"/>
    </location>
</feature>
<feature type="domain" description="FHA">
    <location>
        <begin position="302"/>
        <end position="377"/>
    </location>
</feature>
<feature type="domain" description="Dilute" evidence="4">
    <location>
        <begin position="525"/>
        <end position="792"/>
    </location>
</feature>
<feature type="domain" description="PDZ" evidence="2">
    <location>
        <begin position="1000"/>
        <end position="1085"/>
    </location>
</feature>
<feature type="region of interest" description="Disordered" evidence="5">
    <location>
        <begin position="221"/>
        <end position="265"/>
    </location>
</feature>
<feature type="region of interest" description="Disordered" evidence="5">
    <location>
        <begin position="868"/>
        <end position="941"/>
    </location>
</feature>
<feature type="compositionally biased region" description="Polar residues" evidence="5">
    <location>
        <begin position="226"/>
        <end position="237"/>
    </location>
</feature>
<feature type="compositionally biased region" description="Polar residues" evidence="5">
    <location>
        <begin position="916"/>
        <end position="927"/>
    </location>
</feature>
<feature type="modified residue" description="Phosphoserine" evidence="11">
    <location>
        <position position="235"/>
    </location>
</feature>
<feature type="modified residue" description="Phosphoserine" evidence="11">
    <location>
        <position position="245"/>
    </location>
</feature>
<feature type="modified residue" description="Phosphoserine" evidence="11">
    <location>
        <position position="248"/>
    </location>
</feature>
<feature type="modified residue" description="Phosphoserine" evidence="11">
    <location>
        <position position="250"/>
    </location>
</feature>
<feature type="modified residue" description="Phosphoserine" evidence="1">
    <location>
        <position position="422"/>
    </location>
</feature>
<feature type="modified residue" description="Phosphoserine" evidence="11">
    <location>
        <position position="432"/>
    </location>
</feature>
<feature type="modified residue" description="Phosphoserine" evidence="11">
    <location>
        <position position="915"/>
    </location>
</feature>
<feature type="splice variant" id="VSP_016100" description="In isoform 3." evidence="9">
    <location>
        <begin position="1"/>
        <end position="269"/>
    </location>
</feature>
<feature type="splice variant" id="VSP_016101" description="In isoform 2, isoform 4 and isoform 5." evidence="7 8 9">
    <location>
        <begin position="1"/>
        <end position="29"/>
    </location>
</feature>
<feature type="splice variant" id="VSP_016102" description="In isoform 4." evidence="9">
    <location>
        <begin position="485"/>
        <end position="1079"/>
    </location>
</feature>
<feature type="splice variant" id="VSP_016103" description="In isoform 2." evidence="7">
    <original>HTPLGAQGLYIQTLLPGSPAASDGRLSLGDQILEVNGSSLRGVSYMRAVDLIRHGGKKMRFLVAKSDMETAKKIRFRNPPS</original>
    <variation>VRTLGPQPSTPPTPTPCFCRLILYSVSTVEASERCPDCLMGLPLGALMEPSAFPWNIPGSG</variation>
    <location>
        <begin position="1019"/>
        <end position="1099"/>
    </location>
</feature>
<feature type="sequence conflict" description="In Ref. 2; BAC37675." evidence="10" ref="2">
    <original>C</original>
    <variation>S</variation>
    <location>
        <position position="575"/>
    </location>
</feature>
<feature type="sequence conflict" description="In Ref. 2; BAC38904." evidence="10" ref="2">
    <original>R</original>
    <variation>Q</variation>
    <location>
        <position position="909"/>
    </location>
</feature>
<accession>Q69Z89</accession>
<accession>Q8BNL0</accession>
<accession>Q8C549</accession>
<accession>Q8C6X2</accession>
<accession>Q8CAL1</accession>
<comment type="function">
    <text evidence="6">Downstream effector of Rap required for cell adhesion and migration of neural crest precursors during development.</text>
</comment>
<comment type="subunit">
    <text evidence="1">Interacts with RAP1A; in a GTP-dependent manner. Does not interact with members of the Ras family. Interacts (via PDZ domain) with KIF14; is recruited to the microtubule network restricting its interaction with activated RAP1A (By similarity).</text>
</comment>
<comment type="alternative products">
    <event type="alternative splicing"/>
    <isoform>
        <id>Q69Z89-1</id>
        <name>1</name>
        <sequence type="displayed"/>
    </isoform>
    <isoform>
        <id>Q69Z89-2</id>
        <name>2</name>
        <sequence type="described" ref="VSP_016101 VSP_016103"/>
    </isoform>
    <isoform>
        <id>Q69Z89-3</id>
        <name>3</name>
        <sequence type="described" ref="VSP_016100"/>
    </isoform>
    <isoform>
        <id>Q69Z89-4</id>
        <name>4</name>
        <sequence type="described" ref="VSP_016101 VSP_016102"/>
    </isoform>
    <isoform>
        <id>Q69Z89-5</id>
        <name>5</name>
        <sequence type="described" ref="VSP_016101"/>
    </isoform>
</comment>
<comment type="similarity">
    <text evidence="10">Belongs to the RADIL family.</text>
</comment>
<comment type="sequence caution" evidence="10">
    <conflict type="frameshift">
        <sequence resource="EMBL-CDS" id="BAC38904"/>
    </conflict>
</comment>
<comment type="sequence caution" evidence="10">
    <conflict type="erroneous initiation">
        <sequence resource="EMBL-CDS" id="BAD32555"/>
    </conflict>
</comment>
<dbReference type="EMBL" id="AK173277">
    <property type="protein sequence ID" value="BAD32555.1"/>
    <property type="status" value="ALT_INIT"/>
    <property type="molecule type" value="mRNA"/>
</dbReference>
<dbReference type="EMBL" id="AK038570">
    <property type="protein sequence ID" value="BAC30049.1"/>
    <property type="molecule type" value="mRNA"/>
</dbReference>
<dbReference type="EMBL" id="AK052964">
    <property type="protein sequence ID" value="BAC35223.1"/>
    <property type="molecule type" value="mRNA"/>
</dbReference>
<dbReference type="EMBL" id="AK079539">
    <property type="protein sequence ID" value="BAC37675.1"/>
    <property type="molecule type" value="mRNA"/>
</dbReference>
<dbReference type="EMBL" id="AK083410">
    <property type="protein sequence ID" value="BAC38904.1"/>
    <property type="status" value="ALT_FRAME"/>
    <property type="molecule type" value="mRNA"/>
</dbReference>
<dbReference type="EMBL" id="BC056483">
    <property type="protein sequence ID" value="AAH56483.1"/>
    <property type="molecule type" value="mRNA"/>
</dbReference>
<dbReference type="CCDS" id="CCDS19827.1">
    <molecule id="Q69Z89-5"/>
</dbReference>
<dbReference type="CCDS" id="CCDS80453.1">
    <molecule id="Q69Z89-1"/>
</dbReference>
<dbReference type="RefSeq" id="NP_001297681.1">
    <molecule id="Q69Z89-1"/>
    <property type="nucleotide sequence ID" value="NM_001310752.1"/>
</dbReference>
<dbReference type="RefSeq" id="NP_848817.2">
    <molecule id="Q69Z89-5"/>
    <property type="nucleotide sequence ID" value="NM_178702.4"/>
</dbReference>
<dbReference type="RefSeq" id="XP_006504749.1">
    <molecule id="Q69Z89-3"/>
    <property type="nucleotide sequence ID" value="XM_006504686.4"/>
</dbReference>
<dbReference type="RefSeq" id="XP_030110307.1">
    <molecule id="Q69Z89-3"/>
    <property type="nucleotide sequence ID" value="XM_030254447.2"/>
</dbReference>
<dbReference type="SMR" id="Q69Z89"/>
<dbReference type="FunCoup" id="Q69Z89">
    <property type="interactions" value="119"/>
</dbReference>
<dbReference type="STRING" id="10090.ENSMUSP00000082910"/>
<dbReference type="GlyGen" id="Q69Z89">
    <property type="glycosylation" value="1 site, 1 N-linked glycan (1 site)"/>
</dbReference>
<dbReference type="iPTMnet" id="Q69Z89"/>
<dbReference type="PhosphoSitePlus" id="Q69Z89"/>
<dbReference type="SwissPalm" id="Q69Z89"/>
<dbReference type="jPOST" id="Q69Z89"/>
<dbReference type="PaxDb" id="10090-ENSMUSP00000064539"/>
<dbReference type="PeptideAtlas" id="Q69Z89"/>
<dbReference type="ProteomicsDB" id="255025">
    <molecule id="Q69Z89-1"/>
</dbReference>
<dbReference type="ProteomicsDB" id="255026">
    <molecule id="Q69Z89-2"/>
</dbReference>
<dbReference type="ProteomicsDB" id="255027">
    <molecule id="Q69Z89-3"/>
</dbReference>
<dbReference type="ProteomicsDB" id="255028">
    <molecule id="Q69Z89-4"/>
</dbReference>
<dbReference type="ProteomicsDB" id="255029">
    <molecule id="Q69Z89-5"/>
</dbReference>
<dbReference type="Pumba" id="Q69Z89"/>
<dbReference type="Antibodypedia" id="43694">
    <property type="antibodies" value="147 antibodies from 18 providers"/>
</dbReference>
<dbReference type="Ensembl" id="ENSMUST00000063635.15">
    <molecule id="Q69Z89-5"/>
    <property type="protein sequence ID" value="ENSMUSP00000064539.9"/>
    <property type="gene ID" value="ENSMUSG00000029576.18"/>
</dbReference>
<dbReference type="Ensembl" id="ENSMUST00000085758.10">
    <molecule id="Q69Z89-1"/>
    <property type="protein sequence ID" value="ENSMUSP00000082910.4"/>
    <property type="gene ID" value="ENSMUSG00000029576.18"/>
</dbReference>
<dbReference type="Ensembl" id="ENSMUST00000110784.8">
    <molecule id="Q69Z89-3"/>
    <property type="protein sequence ID" value="ENSMUSP00000106411.2"/>
    <property type="gene ID" value="ENSMUSG00000029576.18"/>
</dbReference>
<dbReference type="GeneID" id="231858"/>
<dbReference type="KEGG" id="mmu:231858"/>
<dbReference type="UCSC" id="uc009ais.2">
    <molecule id="Q69Z89-1"/>
    <property type="organism name" value="mouse"/>
</dbReference>
<dbReference type="UCSC" id="uc009aiu.2">
    <molecule id="Q69Z89-4"/>
    <property type="organism name" value="mouse"/>
</dbReference>
<dbReference type="AGR" id="MGI:2443088"/>
<dbReference type="CTD" id="55698"/>
<dbReference type="MGI" id="MGI:2443088">
    <property type="gene designation" value="Radil"/>
</dbReference>
<dbReference type="VEuPathDB" id="HostDB:ENSMUSG00000029576"/>
<dbReference type="eggNOG" id="KOG0160">
    <property type="taxonomic scope" value="Eukaryota"/>
</dbReference>
<dbReference type="GeneTree" id="ENSGT00940000159293"/>
<dbReference type="HOGENOM" id="CLU_010386_0_0_1"/>
<dbReference type="InParanoid" id="Q69Z89"/>
<dbReference type="OMA" id="HCTIRRQ"/>
<dbReference type="OrthoDB" id="3908708at2759"/>
<dbReference type="PhylomeDB" id="Q69Z89"/>
<dbReference type="TreeFam" id="TF350641"/>
<dbReference type="BioGRID-ORCS" id="231858">
    <property type="hits" value="2 hits in 75 CRISPR screens"/>
</dbReference>
<dbReference type="ChiTaRS" id="Radil">
    <property type="organism name" value="mouse"/>
</dbReference>
<dbReference type="PRO" id="PR:Q69Z89"/>
<dbReference type="Proteomes" id="UP000000589">
    <property type="component" value="Chromosome 5"/>
</dbReference>
<dbReference type="RNAct" id="Q69Z89">
    <property type="molecule type" value="protein"/>
</dbReference>
<dbReference type="Bgee" id="ENSMUSG00000029576">
    <property type="expression patterns" value="Expressed in habenula and 173 other cell types or tissues"/>
</dbReference>
<dbReference type="ExpressionAtlas" id="Q69Z89">
    <property type="expression patterns" value="baseline and differential"/>
</dbReference>
<dbReference type="GO" id="GO:0005874">
    <property type="term" value="C:microtubule"/>
    <property type="evidence" value="ECO:0000266"/>
    <property type="project" value="MGI"/>
</dbReference>
<dbReference type="GO" id="GO:0032991">
    <property type="term" value="C:protein-containing complex"/>
    <property type="evidence" value="ECO:0007669"/>
    <property type="project" value="Ensembl"/>
</dbReference>
<dbReference type="GO" id="GO:0007165">
    <property type="term" value="P:signal transduction"/>
    <property type="evidence" value="ECO:0007669"/>
    <property type="project" value="InterPro"/>
</dbReference>
<dbReference type="GO" id="GO:0034446">
    <property type="term" value="P:substrate adhesion-dependent cell spreading"/>
    <property type="evidence" value="ECO:0000266"/>
    <property type="project" value="MGI"/>
</dbReference>
<dbReference type="CDD" id="cd15472">
    <property type="entry name" value="Myo5p-like_CBD_Rasip1"/>
    <property type="match status" value="1"/>
</dbReference>
<dbReference type="CDD" id="cd06690">
    <property type="entry name" value="PDZ_Radil-like"/>
    <property type="match status" value="1"/>
</dbReference>
<dbReference type="CDD" id="cd17116">
    <property type="entry name" value="RA_Radil_like"/>
    <property type="match status" value="1"/>
</dbReference>
<dbReference type="FunFam" id="2.30.42.10:FF:000156">
    <property type="entry name" value="Ras-associating and dilute domain-containing protein"/>
    <property type="match status" value="1"/>
</dbReference>
<dbReference type="FunFam" id="3.10.20.90:FF:000265">
    <property type="entry name" value="Ras-associating and dilute domain-containing protein"/>
    <property type="match status" value="1"/>
</dbReference>
<dbReference type="FunFam" id="2.60.200.20:FF:000040">
    <property type="entry name" value="ras-associating and dilute domain-containing protein"/>
    <property type="match status" value="1"/>
</dbReference>
<dbReference type="Gene3D" id="2.30.42.10">
    <property type="match status" value="1"/>
</dbReference>
<dbReference type="Gene3D" id="2.60.200.20">
    <property type="match status" value="1"/>
</dbReference>
<dbReference type="Gene3D" id="3.10.20.90">
    <property type="entry name" value="Phosphatidylinositol 3-kinase Catalytic Subunit, Chain A, domain 1"/>
    <property type="match status" value="1"/>
</dbReference>
<dbReference type="InterPro" id="IPR037983">
    <property type="entry name" value="CBD_Rasip1/Radil"/>
</dbReference>
<dbReference type="InterPro" id="IPR002710">
    <property type="entry name" value="Dilute_dom"/>
</dbReference>
<dbReference type="InterPro" id="IPR000253">
    <property type="entry name" value="FHA_dom"/>
</dbReference>
<dbReference type="InterPro" id="IPR001478">
    <property type="entry name" value="PDZ"/>
</dbReference>
<dbReference type="InterPro" id="IPR036034">
    <property type="entry name" value="PDZ_sf"/>
</dbReference>
<dbReference type="InterPro" id="IPR000159">
    <property type="entry name" value="RA_dom"/>
</dbReference>
<dbReference type="InterPro" id="IPR008984">
    <property type="entry name" value="SMAD_FHA_dom_sf"/>
</dbReference>
<dbReference type="InterPro" id="IPR029071">
    <property type="entry name" value="Ubiquitin-like_domsf"/>
</dbReference>
<dbReference type="InterPro" id="IPR052072">
    <property type="entry name" value="Vascular_dev_regulator"/>
</dbReference>
<dbReference type="PANTHER" id="PTHR16027">
    <property type="entry name" value="DILUTE DOMAIN-CONTAINING PROTEIN YPR089W"/>
    <property type="match status" value="1"/>
</dbReference>
<dbReference type="PANTHER" id="PTHR16027:SF3">
    <property type="entry name" value="RAS-ASSOCIATING AND DILUTE DOMAIN-CONTAINING PROTEIN"/>
    <property type="match status" value="1"/>
</dbReference>
<dbReference type="Pfam" id="PF01843">
    <property type="entry name" value="DIL"/>
    <property type="match status" value="1"/>
</dbReference>
<dbReference type="Pfam" id="PF00498">
    <property type="entry name" value="FHA"/>
    <property type="match status" value="1"/>
</dbReference>
<dbReference type="Pfam" id="PF00595">
    <property type="entry name" value="PDZ"/>
    <property type="match status" value="1"/>
</dbReference>
<dbReference type="Pfam" id="PF00788">
    <property type="entry name" value="RA"/>
    <property type="match status" value="1"/>
</dbReference>
<dbReference type="SMART" id="SM01132">
    <property type="entry name" value="DIL"/>
    <property type="match status" value="1"/>
</dbReference>
<dbReference type="SMART" id="SM00228">
    <property type="entry name" value="PDZ"/>
    <property type="match status" value="1"/>
</dbReference>
<dbReference type="SMART" id="SM00314">
    <property type="entry name" value="RA"/>
    <property type="match status" value="1"/>
</dbReference>
<dbReference type="SUPFAM" id="SSF50156">
    <property type="entry name" value="PDZ domain-like"/>
    <property type="match status" value="1"/>
</dbReference>
<dbReference type="SUPFAM" id="SSF49879">
    <property type="entry name" value="SMAD/FHA domain"/>
    <property type="match status" value="1"/>
</dbReference>
<dbReference type="SUPFAM" id="SSF54236">
    <property type="entry name" value="Ubiquitin-like"/>
    <property type="match status" value="1"/>
</dbReference>
<dbReference type="PROSITE" id="PS51126">
    <property type="entry name" value="DILUTE"/>
    <property type="match status" value="1"/>
</dbReference>
<dbReference type="PROSITE" id="PS50106">
    <property type="entry name" value="PDZ"/>
    <property type="match status" value="1"/>
</dbReference>
<dbReference type="PROSITE" id="PS50200">
    <property type="entry name" value="RA"/>
    <property type="match status" value="1"/>
</dbReference>
<protein>
    <recommendedName>
        <fullName>Ras-associating and dilute domain-containing protein</fullName>
    </recommendedName>
</protein>
<evidence type="ECO:0000250" key="1">
    <source>
        <dbReference type="UniProtKB" id="Q96JH8"/>
    </source>
</evidence>
<evidence type="ECO:0000255" key="2">
    <source>
        <dbReference type="PROSITE-ProRule" id="PRU00143"/>
    </source>
</evidence>
<evidence type="ECO:0000255" key="3">
    <source>
        <dbReference type="PROSITE-ProRule" id="PRU00166"/>
    </source>
</evidence>
<evidence type="ECO:0000255" key="4">
    <source>
        <dbReference type="PROSITE-ProRule" id="PRU00503"/>
    </source>
</evidence>
<evidence type="ECO:0000256" key="5">
    <source>
        <dbReference type="SAM" id="MobiDB-lite"/>
    </source>
</evidence>
<evidence type="ECO:0000269" key="6">
    <source>
    </source>
</evidence>
<evidence type="ECO:0000303" key="7">
    <source>
    </source>
</evidence>
<evidence type="ECO:0000303" key="8">
    <source>
    </source>
</evidence>
<evidence type="ECO:0000303" key="9">
    <source>
    </source>
</evidence>
<evidence type="ECO:0000305" key="10"/>
<evidence type="ECO:0007744" key="11">
    <source>
    </source>
</evidence>
<gene>
    <name type="primary">Radil</name>
    <name type="synonym">Kiaa1849</name>
</gene>
<keyword id="KW-0025">Alternative splicing</keyword>
<keyword id="KW-0130">Cell adhesion</keyword>
<keyword id="KW-0217">Developmental protein</keyword>
<keyword id="KW-0597">Phosphoprotein</keyword>
<keyword id="KW-1185">Reference proteome</keyword>
<proteinExistence type="evidence at protein level"/>
<name>RADIL_MOUSE</name>